<organism>
    <name type="scientific">Trypanosoma brucei rhodesiense</name>
    <dbReference type="NCBI Taxonomy" id="31286"/>
    <lineage>
        <taxon>Eukaryota</taxon>
        <taxon>Discoba</taxon>
        <taxon>Euglenozoa</taxon>
        <taxon>Kinetoplastea</taxon>
        <taxon>Metakinetoplastina</taxon>
        <taxon>Trypanosomatida</taxon>
        <taxon>Trypanosomatidae</taxon>
        <taxon>Trypanosoma</taxon>
    </lineage>
</organism>
<proteinExistence type="evidence at protein level"/>
<accession>P69301</accession>
<accession>Q26773</accession>
<protein>
    <recommendedName>
        <fullName>Kinetoplastid membrane protein 11</fullName>
        <shortName>KMP-11</shortName>
    </recommendedName>
</protein>
<evidence type="ECO:0000250" key="1"/>
<evidence type="ECO:0000269" key="2">
    <source>
    </source>
</evidence>
<evidence type="ECO:0000305" key="3"/>
<sequence>MATTYEEFAAKLDRLDAEFAKKMEEQNKRFFADKPDEATLSPEMKEHYEKFEKMIQEHTDKFNKKMREHSEHFKAKFAELLEQQKNAQFPGK</sequence>
<dbReference type="EMBL" id="X96439">
    <property type="protein sequence ID" value="CAA65305.1"/>
    <property type="molecule type" value="Genomic_DNA"/>
</dbReference>
<dbReference type="SMR" id="P69301"/>
<dbReference type="GO" id="GO:0005737">
    <property type="term" value="C:cytoplasm"/>
    <property type="evidence" value="ECO:0007669"/>
    <property type="project" value="UniProtKB-KW"/>
</dbReference>
<dbReference type="GO" id="GO:0005874">
    <property type="term" value="C:microtubule"/>
    <property type="evidence" value="ECO:0007669"/>
    <property type="project" value="UniProtKB-KW"/>
</dbReference>
<dbReference type="GO" id="GO:0015630">
    <property type="term" value="C:microtubule cytoskeleton"/>
    <property type="evidence" value="ECO:0000250"/>
    <property type="project" value="UniProtKB"/>
</dbReference>
<dbReference type="GO" id="GO:0007010">
    <property type="term" value="P:cytoskeleton organization"/>
    <property type="evidence" value="ECO:0000250"/>
    <property type="project" value="UniProtKB"/>
</dbReference>
<dbReference type="GO" id="GO:0006952">
    <property type="term" value="P:defense response"/>
    <property type="evidence" value="ECO:0007669"/>
    <property type="project" value="InterPro"/>
</dbReference>
<dbReference type="GO" id="GO:0008284">
    <property type="term" value="P:positive regulation of cell population proliferation"/>
    <property type="evidence" value="ECO:0007669"/>
    <property type="project" value="InterPro"/>
</dbReference>
<dbReference type="InterPro" id="IPR004132">
    <property type="entry name" value="KMP11"/>
</dbReference>
<dbReference type="Pfam" id="PF03037">
    <property type="entry name" value="KMP11"/>
    <property type="match status" value="1"/>
</dbReference>
<name>KM11_TRYBR</name>
<comment type="function">
    <text evidence="1">May be involved in the regulation of the cytoskeleton through interaction with the subpellicular microtubules. May be involved in parasite mobility and attachment to the surface of the host cell. Behaves as a strong immunogen during infection (By similarity).</text>
</comment>
<comment type="subunit">
    <text evidence="1">Monomer.</text>
</comment>
<comment type="subcellular location">
    <subcellularLocation>
        <location evidence="2">Cytoplasm</location>
        <location evidence="2">Cytoskeleton</location>
    </subcellularLocation>
    <text>Associated with microtubules.</text>
</comment>
<comment type="similarity">
    <text evidence="3">Belongs to the KMP-11 family.</text>
</comment>
<feature type="chain" id="PRO_0000205716" description="Kinetoplastid membrane protein 11">
    <location>
        <begin position="1"/>
        <end position="92"/>
    </location>
</feature>
<gene>
    <name type="primary">KMP-11</name>
</gene>
<keyword id="KW-0963">Cytoplasm</keyword>
<keyword id="KW-0206">Cytoskeleton</keyword>
<keyword id="KW-0903">Direct protein sequencing</keyword>
<keyword id="KW-0493">Microtubule</keyword>
<reference key="1">
    <citation type="journal article" date="1996" name="Mol. Biochem. Parasitol.">
        <title>Molecular characterization of the kinetoplastid membrane protein-11 from African trypanosomes.</title>
        <authorList>
            <person name="Stebeck C.E."/>
            <person name="Baron G.S."/>
            <person name="Beecroft R.P."/>
            <person name="Pearson T.W."/>
        </authorList>
    </citation>
    <scope>NUCLEOTIDE SEQUENCE [GENOMIC DNA]</scope>
    <scope>PROTEIN SEQUENCE OF 32-45</scope>
</reference>
<reference key="2">
    <citation type="journal article" date="1995" name="Mol. Biochem. Parasitol.">
        <title>Kinetoplastid membrane protein-11 (KMP-11) is differentially expressed during the life cycle of African trypanosomes and is found in a wide variety of kinetoplastid parasites.</title>
        <authorList>
            <person name="Stebeck C.E."/>
            <person name="Beecroft R.P."/>
            <person name="Singh B.N."/>
            <person name="Jardim A."/>
            <person name="Olafson R.W."/>
            <person name="Tuckey C."/>
            <person name="Prenevost K.D."/>
            <person name="Pearson T.W."/>
        </authorList>
    </citation>
    <scope>SUBCELLULAR LOCATION</scope>
</reference>